<name>NIFZ_KLEOX</name>
<proteinExistence type="inferred from homology"/>
<feature type="chain" id="PRO_0000096839" description="Protein NifZ">
    <location>
        <begin position="1"/>
        <end position="148"/>
    </location>
</feature>
<organism>
    <name type="scientific">Klebsiella oxytoca</name>
    <dbReference type="NCBI Taxonomy" id="571"/>
    <lineage>
        <taxon>Bacteria</taxon>
        <taxon>Pseudomonadati</taxon>
        <taxon>Pseudomonadota</taxon>
        <taxon>Gammaproteobacteria</taxon>
        <taxon>Enterobacterales</taxon>
        <taxon>Enterobacteriaceae</taxon>
        <taxon>Klebsiella/Raoultella group</taxon>
        <taxon>Klebsiella</taxon>
    </lineage>
</organism>
<sequence length="148" mass="16659">MRPKFTFSEEVRVVRAIRNDGTVAGFAPGALLVRRGSTGFVRDWGVFLQDQIIYQIHFPETDRIIGCREQELIPITQPWLAGNLQYRDSVTCQMALAVNGDVVVSAGQRGRVEATDRGELGDSYTVDFSGRWFRVPVQAIALIEEREE</sequence>
<dbReference type="EMBL" id="X05887">
    <property type="protein sequence ID" value="CAA29312.1"/>
    <property type="molecule type" value="Genomic_DNA"/>
</dbReference>
<dbReference type="STRING" id="571.AB185_16975"/>
<dbReference type="eggNOG" id="COG0760">
    <property type="taxonomic scope" value="Bacteria"/>
</dbReference>
<dbReference type="GO" id="GO:0009399">
    <property type="term" value="P:nitrogen fixation"/>
    <property type="evidence" value="ECO:0007669"/>
    <property type="project" value="UniProtKB-KW"/>
</dbReference>
<dbReference type="InterPro" id="IPR007415">
    <property type="entry name" value="Nitrogenase_MoFe_mat_NifZ"/>
</dbReference>
<dbReference type="Pfam" id="PF04319">
    <property type="entry name" value="NifZ"/>
    <property type="match status" value="1"/>
</dbReference>
<accession>P0A3U3</accession>
<accession>P08533</accession>
<comment type="similarity">
    <text evidence="1">Belongs to the NifZ family.</text>
</comment>
<gene>
    <name type="primary">nifZ</name>
</gene>
<evidence type="ECO:0000305" key="1"/>
<keyword id="KW-0535">Nitrogen fixation</keyword>
<reference key="1">
    <citation type="journal article" date="1987" name="Eur. J. Biochem.">
        <title>The nucleotide sequence of the nifM gene of Klebsiella pneumoniae and identification of a new nif gene: nifZ.</title>
        <authorList>
            <person name="Paul W."/>
            <person name="Merrick M.J."/>
        </authorList>
    </citation>
    <scope>NUCLEOTIDE SEQUENCE [GENOMIC DNA]</scope>
    <source>
        <strain>M5a1</strain>
    </source>
</reference>
<protein>
    <recommendedName>
        <fullName>Protein NifZ</fullName>
    </recommendedName>
</protein>